<gene>
    <name type="primary">araD</name>
</gene>
<feature type="chain" id="PRO_0000162917" description="L-ribulose-5-phosphate 4-epimerase">
    <location>
        <begin position="1"/>
        <end position="228"/>
    </location>
</feature>
<feature type="active site" description="Proton donor/acceptor" evidence="1">
    <location>
        <position position="119"/>
    </location>
</feature>
<feature type="active site" description="Proton donor/acceptor" evidence="1">
    <location>
        <position position="226"/>
    </location>
</feature>
<feature type="binding site" evidence="2">
    <location>
        <begin position="27"/>
        <end position="28"/>
    </location>
    <ligand>
        <name>substrate</name>
    </ligand>
</feature>
<feature type="binding site" evidence="2">
    <location>
        <begin position="44"/>
        <end position="45"/>
    </location>
    <ligand>
        <name>substrate</name>
    </ligand>
</feature>
<feature type="binding site" evidence="2">
    <location>
        <begin position="73"/>
        <end position="74"/>
    </location>
    <ligand>
        <name>substrate</name>
    </ligand>
</feature>
<feature type="binding site" evidence="1">
    <location>
        <position position="75"/>
    </location>
    <ligand>
        <name>Zn(2+)</name>
        <dbReference type="ChEBI" id="CHEBI:29105"/>
    </ligand>
</feature>
<feature type="binding site" evidence="1">
    <location>
        <position position="94"/>
    </location>
    <ligand>
        <name>Zn(2+)</name>
        <dbReference type="ChEBI" id="CHEBI:29105"/>
    </ligand>
</feature>
<feature type="binding site" evidence="1">
    <location>
        <position position="96"/>
    </location>
    <ligand>
        <name>Zn(2+)</name>
        <dbReference type="ChEBI" id="CHEBI:29105"/>
    </ligand>
</feature>
<feature type="binding site" evidence="1">
    <location>
        <position position="168"/>
    </location>
    <ligand>
        <name>Zn(2+)</name>
        <dbReference type="ChEBI" id="CHEBI:29105"/>
    </ligand>
</feature>
<proteinExistence type="inferred from homology"/>
<keyword id="KW-0054">Arabinose catabolism</keyword>
<keyword id="KW-0119">Carbohydrate metabolism</keyword>
<keyword id="KW-0413">Isomerase</keyword>
<keyword id="KW-0479">Metal-binding</keyword>
<keyword id="KW-0862">Zinc</keyword>
<evidence type="ECO:0000250" key="1">
    <source>
        <dbReference type="UniProtKB" id="P08203"/>
    </source>
</evidence>
<evidence type="ECO:0000250" key="2">
    <source>
        <dbReference type="UniProtKB" id="P0AB87"/>
    </source>
</evidence>
<accession>Q9S469</accession>
<name>ARAD_GEOSE</name>
<protein>
    <recommendedName>
        <fullName evidence="1">L-ribulose-5-phosphate 4-epimerase</fullName>
        <ecNumber evidence="1">5.1.3.4</ecNumber>
    </recommendedName>
    <alternativeName>
        <fullName evidence="1">Phosphoribulose isomerase</fullName>
    </alternativeName>
</protein>
<dbReference type="EC" id="5.1.3.4" evidence="1"/>
<dbReference type="EMBL" id="AF160811">
    <property type="protein sequence ID" value="AAD45716.1"/>
    <property type="molecule type" value="Genomic_DNA"/>
</dbReference>
<dbReference type="SMR" id="Q9S469"/>
<dbReference type="UniPathway" id="UPA00145">
    <property type="reaction ID" value="UER00567"/>
</dbReference>
<dbReference type="GO" id="GO:0005829">
    <property type="term" value="C:cytosol"/>
    <property type="evidence" value="ECO:0007669"/>
    <property type="project" value="TreeGrafter"/>
</dbReference>
<dbReference type="GO" id="GO:0016832">
    <property type="term" value="F:aldehyde-lyase activity"/>
    <property type="evidence" value="ECO:0007669"/>
    <property type="project" value="TreeGrafter"/>
</dbReference>
<dbReference type="GO" id="GO:0008742">
    <property type="term" value="F:L-ribulose-phosphate 4-epimerase activity"/>
    <property type="evidence" value="ECO:0000250"/>
    <property type="project" value="UniProtKB"/>
</dbReference>
<dbReference type="GO" id="GO:0008270">
    <property type="term" value="F:zinc ion binding"/>
    <property type="evidence" value="ECO:0000250"/>
    <property type="project" value="UniProtKB"/>
</dbReference>
<dbReference type="GO" id="GO:0019569">
    <property type="term" value="P:L-arabinose catabolic process to xylulose 5-phosphate"/>
    <property type="evidence" value="ECO:0000250"/>
    <property type="project" value="UniProtKB"/>
</dbReference>
<dbReference type="CDD" id="cd00398">
    <property type="entry name" value="Aldolase_II"/>
    <property type="match status" value="1"/>
</dbReference>
<dbReference type="FunFam" id="3.40.225.10:FF:000001">
    <property type="entry name" value="L-ribulose-5-phosphate 4-epimerase UlaF"/>
    <property type="match status" value="1"/>
</dbReference>
<dbReference type="Gene3D" id="3.40.225.10">
    <property type="entry name" value="Class II aldolase/adducin N-terminal domain"/>
    <property type="match status" value="1"/>
</dbReference>
<dbReference type="InterPro" id="IPR050197">
    <property type="entry name" value="Aldolase_class_II_sugar_metab"/>
</dbReference>
<dbReference type="InterPro" id="IPR001303">
    <property type="entry name" value="Aldolase_II/adducin_N"/>
</dbReference>
<dbReference type="InterPro" id="IPR036409">
    <property type="entry name" value="Aldolase_II/adducin_N_sf"/>
</dbReference>
<dbReference type="InterPro" id="IPR004661">
    <property type="entry name" value="AraD"/>
</dbReference>
<dbReference type="NCBIfam" id="TIGR00760">
    <property type="entry name" value="araD"/>
    <property type="match status" value="1"/>
</dbReference>
<dbReference type="NCBIfam" id="NF006047">
    <property type="entry name" value="PRK08193.1"/>
    <property type="match status" value="1"/>
</dbReference>
<dbReference type="NCBIfam" id="NF009003">
    <property type="entry name" value="PRK12348.1"/>
    <property type="match status" value="1"/>
</dbReference>
<dbReference type="PANTHER" id="PTHR22789">
    <property type="entry name" value="FUCULOSE PHOSPHATE ALDOLASE"/>
    <property type="match status" value="1"/>
</dbReference>
<dbReference type="PANTHER" id="PTHR22789:SF8">
    <property type="entry name" value="L-RIBULOSE-5-PHOSPHATE 4-EPIMERASE SGBE"/>
    <property type="match status" value="1"/>
</dbReference>
<dbReference type="Pfam" id="PF00596">
    <property type="entry name" value="Aldolase_II"/>
    <property type="match status" value="1"/>
</dbReference>
<dbReference type="SMART" id="SM01007">
    <property type="entry name" value="Aldolase_II"/>
    <property type="match status" value="1"/>
</dbReference>
<dbReference type="SUPFAM" id="SSF53639">
    <property type="entry name" value="AraD/HMP-PK domain-like"/>
    <property type="match status" value="1"/>
</dbReference>
<sequence>MLEELKQAVLEANLQLPQYRLVTFTWGNVSGIDRERGLVVIKPSGVAYDKLTIDDMVVVDLTGNVVEGDLKPSSDTPTHLWLYKQFPGIGGIVHTHSTWATVWAQAGKGIPALGTTHADYFYGEIPCTRPMTNEEIQGAYELETGKVITETFRFLDPLQMPGVLVHGHGPFAWGKDPANAVHNAVVLEEVAKMAARTYMLNPNAKPISQTLLDRHYLRKHGANAYYGQ</sequence>
<comment type="function">
    <text evidence="1">Involved in the degradation of L-arabinose. Catalyzes the interconversion of L-ribulose 5-phosphate (LRu5P) and D-xylulose 5-phosphate (D-Xu5P) via a retroaldol/aldol mechanism (carbon-carbon bond cleavage analogous to a class II aldolase reaction).</text>
</comment>
<comment type="catalytic activity">
    <reaction evidence="1">
        <text>L-ribulose 5-phosphate = D-xylulose 5-phosphate</text>
        <dbReference type="Rhea" id="RHEA:22368"/>
        <dbReference type="ChEBI" id="CHEBI:57737"/>
        <dbReference type="ChEBI" id="CHEBI:58226"/>
        <dbReference type="EC" id="5.1.3.4"/>
    </reaction>
</comment>
<comment type="cofactor">
    <cofactor evidence="1">
        <name>Zn(2+)</name>
        <dbReference type="ChEBI" id="CHEBI:29105"/>
    </cofactor>
    <text evidence="1">Binds 1 zinc ion per subunit.</text>
</comment>
<comment type="pathway">
    <text evidence="1">Carbohydrate degradation; L-arabinose degradation via L-ribulose; D-xylulose 5-phosphate from L-arabinose (bacterial route): step 3/3.</text>
</comment>
<comment type="similarity">
    <text evidence="1">Belongs to the aldolase class II family. AraD/FucA subfamily.</text>
</comment>
<reference key="1">
    <citation type="submission" date="1999-06" db="EMBL/GenBank/DDBJ databases">
        <title>The L-arabinose utilization gene cluster from Bacillus stearothermophilus T-6.</title>
        <authorList>
            <person name="Gilead-Gropper S."/>
            <person name="Shoham Y."/>
        </authorList>
    </citation>
    <scope>NUCLEOTIDE SEQUENCE [GENOMIC DNA]</scope>
    <source>
        <strain>T-6</strain>
    </source>
</reference>
<organism>
    <name type="scientific">Geobacillus stearothermophilus</name>
    <name type="common">Bacillus stearothermophilus</name>
    <dbReference type="NCBI Taxonomy" id="1422"/>
    <lineage>
        <taxon>Bacteria</taxon>
        <taxon>Bacillati</taxon>
        <taxon>Bacillota</taxon>
        <taxon>Bacilli</taxon>
        <taxon>Bacillales</taxon>
        <taxon>Anoxybacillaceae</taxon>
        <taxon>Geobacillus</taxon>
    </lineage>
</organism>